<sequence length="65" mass="7310">MPKMKTKSSAKKRFSIRAGGSIKRGQAFKRHILTKKTTKVKRHLRGATAVHERDAASVRAMMPYA</sequence>
<feature type="chain" id="PRO_0000258666" description="Large ribosomal subunit protein bL35">
    <location>
        <begin position="1"/>
        <end position="65"/>
    </location>
</feature>
<feature type="region of interest" description="Disordered" evidence="2">
    <location>
        <begin position="1"/>
        <end position="21"/>
    </location>
</feature>
<feature type="compositionally biased region" description="Basic residues" evidence="2">
    <location>
        <begin position="1"/>
        <end position="15"/>
    </location>
</feature>
<dbReference type="EMBL" id="CP000089">
    <property type="protein sequence ID" value="AAZ47405.1"/>
    <property type="molecule type" value="Genomic_DNA"/>
</dbReference>
<dbReference type="SMR" id="Q47CM6"/>
<dbReference type="STRING" id="159087.Daro_2675"/>
<dbReference type="KEGG" id="dar:Daro_2675"/>
<dbReference type="eggNOG" id="COG0291">
    <property type="taxonomic scope" value="Bacteria"/>
</dbReference>
<dbReference type="HOGENOM" id="CLU_169643_1_0_4"/>
<dbReference type="OrthoDB" id="47476at2"/>
<dbReference type="GO" id="GO:0022625">
    <property type="term" value="C:cytosolic large ribosomal subunit"/>
    <property type="evidence" value="ECO:0007669"/>
    <property type="project" value="TreeGrafter"/>
</dbReference>
<dbReference type="GO" id="GO:0003735">
    <property type="term" value="F:structural constituent of ribosome"/>
    <property type="evidence" value="ECO:0007669"/>
    <property type="project" value="InterPro"/>
</dbReference>
<dbReference type="GO" id="GO:0006412">
    <property type="term" value="P:translation"/>
    <property type="evidence" value="ECO:0007669"/>
    <property type="project" value="UniProtKB-UniRule"/>
</dbReference>
<dbReference type="FunFam" id="4.10.410.60:FF:000001">
    <property type="entry name" value="50S ribosomal protein L35"/>
    <property type="match status" value="1"/>
</dbReference>
<dbReference type="Gene3D" id="4.10.410.60">
    <property type="match status" value="1"/>
</dbReference>
<dbReference type="HAMAP" id="MF_00514">
    <property type="entry name" value="Ribosomal_bL35"/>
    <property type="match status" value="1"/>
</dbReference>
<dbReference type="InterPro" id="IPR001706">
    <property type="entry name" value="Ribosomal_bL35"/>
</dbReference>
<dbReference type="InterPro" id="IPR021137">
    <property type="entry name" value="Ribosomal_bL35-like"/>
</dbReference>
<dbReference type="InterPro" id="IPR018265">
    <property type="entry name" value="Ribosomal_bL35_CS"/>
</dbReference>
<dbReference type="InterPro" id="IPR037229">
    <property type="entry name" value="Ribosomal_bL35_sf"/>
</dbReference>
<dbReference type="NCBIfam" id="TIGR00001">
    <property type="entry name" value="rpmI_bact"/>
    <property type="match status" value="1"/>
</dbReference>
<dbReference type="PANTHER" id="PTHR33343">
    <property type="entry name" value="54S RIBOSOMAL PROTEIN BL35M"/>
    <property type="match status" value="1"/>
</dbReference>
<dbReference type="PANTHER" id="PTHR33343:SF1">
    <property type="entry name" value="LARGE RIBOSOMAL SUBUNIT PROTEIN BL35M"/>
    <property type="match status" value="1"/>
</dbReference>
<dbReference type="Pfam" id="PF01632">
    <property type="entry name" value="Ribosomal_L35p"/>
    <property type="match status" value="1"/>
</dbReference>
<dbReference type="PRINTS" id="PR00064">
    <property type="entry name" value="RIBOSOMALL35"/>
</dbReference>
<dbReference type="SUPFAM" id="SSF143034">
    <property type="entry name" value="L35p-like"/>
    <property type="match status" value="1"/>
</dbReference>
<dbReference type="PROSITE" id="PS00936">
    <property type="entry name" value="RIBOSOMAL_L35"/>
    <property type="match status" value="1"/>
</dbReference>
<evidence type="ECO:0000255" key="1">
    <source>
        <dbReference type="HAMAP-Rule" id="MF_00514"/>
    </source>
</evidence>
<evidence type="ECO:0000256" key="2">
    <source>
        <dbReference type="SAM" id="MobiDB-lite"/>
    </source>
</evidence>
<evidence type="ECO:0000305" key="3"/>
<accession>Q47CM6</accession>
<organism>
    <name type="scientific">Dechloromonas aromatica (strain RCB)</name>
    <dbReference type="NCBI Taxonomy" id="159087"/>
    <lineage>
        <taxon>Bacteria</taxon>
        <taxon>Pseudomonadati</taxon>
        <taxon>Pseudomonadota</taxon>
        <taxon>Betaproteobacteria</taxon>
        <taxon>Rhodocyclales</taxon>
        <taxon>Azonexaceae</taxon>
        <taxon>Dechloromonas</taxon>
    </lineage>
</organism>
<reference key="1">
    <citation type="journal article" date="2009" name="BMC Genomics">
        <title>Metabolic analysis of the soil microbe Dechloromonas aromatica str. RCB: indications of a surprisingly complex life-style and cryptic anaerobic pathways for aromatic degradation.</title>
        <authorList>
            <person name="Salinero K.K."/>
            <person name="Keller K."/>
            <person name="Feil W.S."/>
            <person name="Feil H."/>
            <person name="Trong S."/>
            <person name="Di Bartolo G."/>
            <person name="Lapidus A."/>
        </authorList>
    </citation>
    <scope>NUCLEOTIDE SEQUENCE [LARGE SCALE GENOMIC DNA]</scope>
    <source>
        <strain>RCB</strain>
    </source>
</reference>
<protein>
    <recommendedName>
        <fullName evidence="1">Large ribosomal subunit protein bL35</fullName>
    </recommendedName>
    <alternativeName>
        <fullName evidence="3">50S ribosomal protein L35</fullName>
    </alternativeName>
</protein>
<name>RL35_DECAR</name>
<proteinExistence type="inferred from homology"/>
<comment type="similarity">
    <text evidence="1">Belongs to the bacterial ribosomal protein bL35 family.</text>
</comment>
<gene>
    <name evidence="1" type="primary">rpmI</name>
    <name type="ordered locus">Daro_2675</name>
</gene>
<keyword id="KW-0687">Ribonucleoprotein</keyword>
<keyword id="KW-0689">Ribosomal protein</keyword>